<feature type="chain" id="PRO_1000139260" description="Cyclic pyranopterin monophosphate synthase">
    <location>
        <begin position="1"/>
        <end position="161"/>
    </location>
</feature>
<feature type="active site" evidence="1">
    <location>
        <position position="128"/>
    </location>
</feature>
<feature type="binding site" evidence="1">
    <location>
        <begin position="75"/>
        <end position="77"/>
    </location>
    <ligand>
        <name>substrate</name>
    </ligand>
</feature>
<feature type="binding site" evidence="1">
    <location>
        <begin position="113"/>
        <end position="114"/>
    </location>
    <ligand>
        <name>substrate</name>
    </ligand>
</feature>
<sequence>MSQLTHINAAGEAHMVDVSAKAETVREARAEAFVTMRSETLAMIIDGRHHKGDVFATARIAGIQAAKRTWDLIPLCHPLMLSKVEVNLQAEPEHNRVRIETLCRLTGKTGVEMEALTAASVAALTIYDMCKAVQKDMVIGPVRLLAKSGGKSGDFKVEADD</sequence>
<protein>
    <recommendedName>
        <fullName evidence="1">Cyclic pyranopterin monophosphate synthase</fullName>
        <ecNumber evidence="1">4.6.1.17</ecNumber>
    </recommendedName>
    <alternativeName>
        <fullName evidence="1">Molybdenum cofactor biosynthesis protein C</fullName>
    </alternativeName>
</protein>
<evidence type="ECO:0000255" key="1">
    <source>
        <dbReference type="HAMAP-Rule" id="MF_01224"/>
    </source>
</evidence>
<keyword id="KW-0456">Lyase</keyword>
<keyword id="KW-0501">Molybdenum cofactor biosynthesis</keyword>
<keyword id="KW-1185">Reference proteome</keyword>
<comment type="function">
    <text evidence="1">Catalyzes the conversion of (8S)-3',8-cyclo-7,8-dihydroguanosine 5'-triphosphate to cyclic pyranopterin monophosphate (cPMP).</text>
</comment>
<comment type="catalytic activity">
    <reaction evidence="1">
        <text>(8S)-3',8-cyclo-7,8-dihydroguanosine 5'-triphosphate = cyclic pyranopterin phosphate + diphosphate</text>
        <dbReference type="Rhea" id="RHEA:49580"/>
        <dbReference type="ChEBI" id="CHEBI:33019"/>
        <dbReference type="ChEBI" id="CHEBI:59648"/>
        <dbReference type="ChEBI" id="CHEBI:131766"/>
        <dbReference type="EC" id="4.6.1.17"/>
    </reaction>
</comment>
<comment type="pathway">
    <text evidence="1">Cofactor biosynthesis; molybdopterin biosynthesis.</text>
</comment>
<comment type="subunit">
    <text evidence="1">Homohexamer; trimer of dimers.</text>
</comment>
<comment type="similarity">
    <text evidence="1">Belongs to the MoaC family.</text>
</comment>
<organism>
    <name type="scientific">Escherichia coli O45:K1 (strain S88 / ExPEC)</name>
    <dbReference type="NCBI Taxonomy" id="585035"/>
    <lineage>
        <taxon>Bacteria</taxon>
        <taxon>Pseudomonadati</taxon>
        <taxon>Pseudomonadota</taxon>
        <taxon>Gammaproteobacteria</taxon>
        <taxon>Enterobacterales</taxon>
        <taxon>Enterobacteriaceae</taxon>
        <taxon>Escherichia</taxon>
    </lineage>
</organism>
<name>MOAC_ECO45</name>
<proteinExistence type="inferred from homology"/>
<accession>B7MGP1</accession>
<dbReference type="EC" id="4.6.1.17" evidence="1"/>
<dbReference type="EMBL" id="CU928161">
    <property type="protein sequence ID" value="CAR02139.1"/>
    <property type="molecule type" value="Genomic_DNA"/>
</dbReference>
<dbReference type="RefSeq" id="WP_000080885.1">
    <property type="nucleotide sequence ID" value="NC_011742.1"/>
</dbReference>
<dbReference type="SMR" id="B7MGP1"/>
<dbReference type="GeneID" id="86945666"/>
<dbReference type="KEGG" id="ecz:ECS88_0800"/>
<dbReference type="HOGENOM" id="CLU_074693_1_1_6"/>
<dbReference type="UniPathway" id="UPA00344"/>
<dbReference type="Proteomes" id="UP000000747">
    <property type="component" value="Chromosome"/>
</dbReference>
<dbReference type="GO" id="GO:0061799">
    <property type="term" value="F:cyclic pyranopterin monophosphate synthase activity"/>
    <property type="evidence" value="ECO:0007669"/>
    <property type="project" value="UniProtKB-UniRule"/>
</dbReference>
<dbReference type="GO" id="GO:0006777">
    <property type="term" value="P:Mo-molybdopterin cofactor biosynthetic process"/>
    <property type="evidence" value="ECO:0007669"/>
    <property type="project" value="UniProtKB-UniRule"/>
</dbReference>
<dbReference type="CDD" id="cd01420">
    <property type="entry name" value="MoaC_PE"/>
    <property type="match status" value="1"/>
</dbReference>
<dbReference type="FunFam" id="3.30.70.640:FF:000001">
    <property type="entry name" value="Cyclic pyranopterin monophosphate synthase"/>
    <property type="match status" value="1"/>
</dbReference>
<dbReference type="Gene3D" id="3.30.70.640">
    <property type="entry name" value="Molybdopterin cofactor biosynthesis C (MoaC) domain"/>
    <property type="match status" value="1"/>
</dbReference>
<dbReference type="HAMAP" id="MF_01224_B">
    <property type="entry name" value="MoaC_B"/>
    <property type="match status" value="1"/>
</dbReference>
<dbReference type="InterPro" id="IPR023045">
    <property type="entry name" value="MoaC"/>
</dbReference>
<dbReference type="InterPro" id="IPR047594">
    <property type="entry name" value="MoaC_bact/euk"/>
</dbReference>
<dbReference type="InterPro" id="IPR036522">
    <property type="entry name" value="MoaC_sf"/>
</dbReference>
<dbReference type="InterPro" id="IPR050105">
    <property type="entry name" value="MoCo_biosynth_MoaA/MoaC"/>
</dbReference>
<dbReference type="InterPro" id="IPR002820">
    <property type="entry name" value="Mopterin_CF_biosynth-C_dom"/>
</dbReference>
<dbReference type="NCBIfam" id="TIGR00581">
    <property type="entry name" value="moaC"/>
    <property type="match status" value="1"/>
</dbReference>
<dbReference type="NCBIfam" id="NF006870">
    <property type="entry name" value="PRK09364.1"/>
    <property type="match status" value="1"/>
</dbReference>
<dbReference type="PANTHER" id="PTHR22960">
    <property type="entry name" value="MOLYBDOPTERIN COFACTOR SYNTHESIS PROTEIN A"/>
    <property type="match status" value="1"/>
</dbReference>
<dbReference type="Pfam" id="PF01967">
    <property type="entry name" value="MoaC"/>
    <property type="match status" value="1"/>
</dbReference>
<dbReference type="SUPFAM" id="SSF55040">
    <property type="entry name" value="Molybdenum cofactor biosynthesis protein C, MoaC"/>
    <property type="match status" value="1"/>
</dbReference>
<reference key="1">
    <citation type="journal article" date="2009" name="PLoS Genet.">
        <title>Organised genome dynamics in the Escherichia coli species results in highly diverse adaptive paths.</title>
        <authorList>
            <person name="Touchon M."/>
            <person name="Hoede C."/>
            <person name="Tenaillon O."/>
            <person name="Barbe V."/>
            <person name="Baeriswyl S."/>
            <person name="Bidet P."/>
            <person name="Bingen E."/>
            <person name="Bonacorsi S."/>
            <person name="Bouchier C."/>
            <person name="Bouvet O."/>
            <person name="Calteau A."/>
            <person name="Chiapello H."/>
            <person name="Clermont O."/>
            <person name="Cruveiller S."/>
            <person name="Danchin A."/>
            <person name="Diard M."/>
            <person name="Dossat C."/>
            <person name="Karoui M.E."/>
            <person name="Frapy E."/>
            <person name="Garry L."/>
            <person name="Ghigo J.M."/>
            <person name="Gilles A.M."/>
            <person name="Johnson J."/>
            <person name="Le Bouguenec C."/>
            <person name="Lescat M."/>
            <person name="Mangenot S."/>
            <person name="Martinez-Jehanne V."/>
            <person name="Matic I."/>
            <person name="Nassif X."/>
            <person name="Oztas S."/>
            <person name="Petit M.A."/>
            <person name="Pichon C."/>
            <person name="Rouy Z."/>
            <person name="Ruf C.S."/>
            <person name="Schneider D."/>
            <person name="Tourret J."/>
            <person name="Vacherie B."/>
            <person name="Vallenet D."/>
            <person name="Medigue C."/>
            <person name="Rocha E.P.C."/>
            <person name="Denamur E."/>
        </authorList>
    </citation>
    <scope>NUCLEOTIDE SEQUENCE [LARGE SCALE GENOMIC DNA]</scope>
    <source>
        <strain>S88 / ExPEC</strain>
    </source>
</reference>
<gene>
    <name evidence="1" type="primary">moaC</name>
    <name type="ordered locus">ECS88_0800</name>
</gene>